<proteinExistence type="inferred from homology"/>
<reference key="1">
    <citation type="journal article" date="2008" name="PLoS ONE">
        <title>Genome sequence of the saprophyte Leptospira biflexa provides insights into the evolution of Leptospira and the pathogenesis of leptospirosis.</title>
        <authorList>
            <person name="Picardeau M."/>
            <person name="Bulach D.M."/>
            <person name="Bouchier C."/>
            <person name="Zuerner R.L."/>
            <person name="Zidane N."/>
            <person name="Wilson P.J."/>
            <person name="Creno S."/>
            <person name="Kuczek E.S."/>
            <person name="Bommezzadri S."/>
            <person name="Davis J.C."/>
            <person name="McGrath A."/>
            <person name="Johnson M.J."/>
            <person name="Boursaux-Eude C."/>
            <person name="Seemann T."/>
            <person name="Rouy Z."/>
            <person name="Coppel R.L."/>
            <person name="Rood J.I."/>
            <person name="Lajus A."/>
            <person name="Davies J.K."/>
            <person name="Medigue C."/>
            <person name="Adler B."/>
        </authorList>
    </citation>
    <scope>NUCLEOTIDE SEQUENCE [LARGE SCALE GENOMIC DNA]</scope>
    <source>
        <strain>Patoc 1 / ATCC 23582 / Paris</strain>
    </source>
</reference>
<organism>
    <name type="scientific">Leptospira biflexa serovar Patoc (strain Patoc 1 / ATCC 23582 / Paris)</name>
    <dbReference type="NCBI Taxonomy" id="456481"/>
    <lineage>
        <taxon>Bacteria</taxon>
        <taxon>Pseudomonadati</taxon>
        <taxon>Spirochaetota</taxon>
        <taxon>Spirochaetia</taxon>
        <taxon>Leptospirales</taxon>
        <taxon>Leptospiraceae</taxon>
        <taxon>Leptospira</taxon>
    </lineage>
</organism>
<sequence length="92" mass="10412">MARSLKKGPFIDDHLMKKITKLNSEGKKTPFKSWSRRSTIYPDMIGHTVMIHNGKAFVPVYVNENMIGHKLGEFAPTRTFKGHGGDKKVAKK</sequence>
<comment type="function">
    <text evidence="1">Protein S19 forms a complex with S13 that binds strongly to the 16S ribosomal RNA.</text>
</comment>
<comment type="similarity">
    <text evidence="1">Belongs to the universal ribosomal protein uS19 family.</text>
</comment>
<keyword id="KW-1185">Reference proteome</keyword>
<keyword id="KW-0687">Ribonucleoprotein</keyword>
<keyword id="KW-0689">Ribosomal protein</keyword>
<keyword id="KW-0694">RNA-binding</keyword>
<keyword id="KW-0699">rRNA-binding</keyword>
<dbReference type="EMBL" id="CP000786">
    <property type="protein sequence ID" value="ABZ98063.1"/>
    <property type="molecule type" value="Genomic_DNA"/>
</dbReference>
<dbReference type="RefSeq" id="WP_002974021.1">
    <property type="nucleotide sequence ID" value="NC_010602.1"/>
</dbReference>
<dbReference type="SMR" id="B0SSH3"/>
<dbReference type="STRING" id="456481.LEPBI_I1960"/>
<dbReference type="GeneID" id="93343073"/>
<dbReference type="KEGG" id="lbi:LEPBI_I1960"/>
<dbReference type="HOGENOM" id="CLU_144911_0_1_12"/>
<dbReference type="OrthoDB" id="9797833at2"/>
<dbReference type="BioCyc" id="LBIF456481:LEPBI_RS09685-MONOMER"/>
<dbReference type="Proteomes" id="UP000001847">
    <property type="component" value="Chromosome I"/>
</dbReference>
<dbReference type="GO" id="GO:0005737">
    <property type="term" value="C:cytoplasm"/>
    <property type="evidence" value="ECO:0007669"/>
    <property type="project" value="UniProtKB-ARBA"/>
</dbReference>
<dbReference type="GO" id="GO:0015935">
    <property type="term" value="C:small ribosomal subunit"/>
    <property type="evidence" value="ECO:0007669"/>
    <property type="project" value="InterPro"/>
</dbReference>
<dbReference type="GO" id="GO:0019843">
    <property type="term" value="F:rRNA binding"/>
    <property type="evidence" value="ECO:0007669"/>
    <property type="project" value="UniProtKB-UniRule"/>
</dbReference>
<dbReference type="GO" id="GO:0003735">
    <property type="term" value="F:structural constituent of ribosome"/>
    <property type="evidence" value="ECO:0007669"/>
    <property type="project" value="InterPro"/>
</dbReference>
<dbReference type="GO" id="GO:0000028">
    <property type="term" value="P:ribosomal small subunit assembly"/>
    <property type="evidence" value="ECO:0007669"/>
    <property type="project" value="TreeGrafter"/>
</dbReference>
<dbReference type="GO" id="GO:0006412">
    <property type="term" value="P:translation"/>
    <property type="evidence" value="ECO:0007669"/>
    <property type="project" value="UniProtKB-UniRule"/>
</dbReference>
<dbReference type="FunFam" id="3.30.860.10:FF:000001">
    <property type="entry name" value="30S ribosomal protein S19"/>
    <property type="match status" value="1"/>
</dbReference>
<dbReference type="Gene3D" id="3.30.860.10">
    <property type="entry name" value="30s Ribosomal Protein S19, Chain A"/>
    <property type="match status" value="1"/>
</dbReference>
<dbReference type="HAMAP" id="MF_00531">
    <property type="entry name" value="Ribosomal_uS19"/>
    <property type="match status" value="1"/>
</dbReference>
<dbReference type="InterPro" id="IPR002222">
    <property type="entry name" value="Ribosomal_uS19"/>
</dbReference>
<dbReference type="InterPro" id="IPR005732">
    <property type="entry name" value="Ribosomal_uS19_bac-type"/>
</dbReference>
<dbReference type="InterPro" id="IPR020934">
    <property type="entry name" value="Ribosomal_uS19_CS"/>
</dbReference>
<dbReference type="InterPro" id="IPR023575">
    <property type="entry name" value="Ribosomal_uS19_SF"/>
</dbReference>
<dbReference type="NCBIfam" id="TIGR01050">
    <property type="entry name" value="rpsS_bact"/>
    <property type="match status" value="1"/>
</dbReference>
<dbReference type="PANTHER" id="PTHR11880">
    <property type="entry name" value="RIBOSOMAL PROTEIN S19P FAMILY MEMBER"/>
    <property type="match status" value="1"/>
</dbReference>
<dbReference type="PANTHER" id="PTHR11880:SF8">
    <property type="entry name" value="SMALL RIBOSOMAL SUBUNIT PROTEIN US19M"/>
    <property type="match status" value="1"/>
</dbReference>
<dbReference type="Pfam" id="PF00203">
    <property type="entry name" value="Ribosomal_S19"/>
    <property type="match status" value="1"/>
</dbReference>
<dbReference type="PIRSF" id="PIRSF002144">
    <property type="entry name" value="Ribosomal_S19"/>
    <property type="match status" value="1"/>
</dbReference>
<dbReference type="PRINTS" id="PR00975">
    <property type="entry name" value="RIBOSOMALS19"/>
</dbReference>
<dbReference type="SUPFAM" id="SSF54570">
    <property type="entry name" value="Ribosomal protein S19"/>
    <property type="match status" value="1"/>
</dbReference>
<dbReference type="PROSITE" id="PS00323">
    <property type="entry name" value="RIBOSOMAL_S19"/>
    <property type="match status" value="1"/>
</dbReference>
<accession>B0SSH3</accession>
<gene>
    <name evidence="1" type="primary">rpsS</name>
    <name type="ordered locus">LEPBI_I1960</name>
</gene>
<feature type="chain" id="PRO_1000127996" description="Small ribosomal subunit protein uS19">
    <location>
        <begin position="1"/>
        <end position="92"/>
    </location>
</feature>
<protein>
    <recommendedName>
        <fullName evidence="1">Small ribosomal subunit protein uS19</fullName>
    </recommendedName>
    <alternativeName>
        <fullName evidence="2">30S ribosomal protein S19</fullName>
    </alternativeName>
</protein>
<evidence type="ECO:0000255" key="1">
    <source>
        <dbReference type="HAMAP-Rule" id="MF_00531"/>
    </source>
</evidence>
<evidence type="ECO:0000305" key="2"/>
<name>RS19_LEPBP</name>